<accession>Q9GKQ6</accession>
<accession>Q9TTB5</accession>
<reference key="1">
    <citation type="submission" date="1998-03" db="EMBL/GenBank/DDBJ databases">
        <authorList>
            <person name="Zhao B."/>
        </authorList>
    </citation>
    <scope>NUCLEOTIDE SEQUENCE [MRNA] OF 1-137</scope>
    <source>
        <tissue>Aorta</tissue>
    </source>
</reference>
<reference key="2">
    <citation type="submission" date="1999-06" db="EMBL/GenBank/DDBJ databases">
        <title>Cloning and sequencing of porcine matrix molecules.</title>
        <authorList>
            <person name="Wang J.F."/>
            <person name="Boykiw R.H."/>
            <person name="Reno C.R."/>
            <person name="Olson M.E."/>
            <person name="Hart D.A."/>
        </authorList>
    </citation>
    <scope>NUCLEOTIDE SEQUENCE [MRNA] OF 138-272</scope>
    <source>
        <tissue>Skin</tissue>
    </source>
</reference>
<dbReference type="EMBL" id="AF159382">
    <property type="protein sequence ID" value="AAF19153.1"/>
    <property type="molecule type" value="mRNA"/>
</dbReference>
<dbReference type="SMR" id="Q9GKQ6"/>
<dbReference type="STRING" id="9823.ENSSSCP00000029666"/>
<dbReference type="GlyCosmos" id="Q9GKQ6">
    <property type="glycosylation" value="2 sites, No reported glycans"/>
</dbReference>
<dbReference type="GlyGen" id="Q9GKQ6">
    <property type="glycosylation" value="2 sites"/>
</dbReference>
<dbReference type="PeptideAtlas" id="Q9GKQ6"/>
<dbReference type="InParanoid" id="Q9GKQ6"/>
<dbReference type="Proteomes" id="UP000008227">
    <property type="component" value="Unplaced"/>
</dbReference>
<dbReference type="Proteomes" id="UP000314985">
    <property type="component" value="Unplaced"/>
</dbReference>
<dbReference type="Proteomes" id="UP000694570">
    <property type="component" value="Unplaced"/>
</dbReference>
<dbReference type="Proteomes" id="UP000694571">
    <property type="component" value="Unplaced"/>
</dbReference>
<dbReference type="Proteomes" id="UP000694720">
    <property type="component" value="Unplaced"/>
</dbReference>
<dbReference type="Proteomes" id="UP000694722">
    <property type="component" value="Unplaced"/>
</dbReference>
<dbReference type="Proteomes" id="UP000694723">
    <property type="component" value="Unplaced"/>
</dbReference>
<dbReference type="Proteomes" id="UP000694724">
    <property type="component" value="Unplaced"/>
</dbReference>
<dbReference type="Proteomes" id="UP000694725">
    <property type="component" value="Unplaced"/>
</dbReference>
<dbReference type="Proteomes" id="UP000694726">
    <property type="component" value="Unplaced"/>
</dbReference>
<dbReference type="Proteomes" id="UP000694727">
    <property type="component" value="Unplaced"/>
</dbReference>
<dbReference type="Proteomes" id="UP000694728">
    <property type="component" value="Unplaced"/>
</dbReference>
<dbReference type="GO" id="GO:0005615">
    <property type="term" value="C:extracellular space"/>
    <property type="evidence" value="ECO:0000318"/>
    <property type="project" value="GO_Central"/>
</dbReference>
<dbReference type="Gene3D" id="3.80.10.10">
    <property type="entry name" value="Ribonuclease Inhibitor"/>
    <property type="match status" value="2"/>
</dbReference>
<dbReference type="InterPro" id="IPR001611">
    <property type="entry name" value="Leu-rich_rpt"/>
</dbReference>
<dbReference type="InterPro" id="IPR003591">
    <property type="entry name" value="Leu-rich_rpt_typical-subtyp"/>
</dbReference>
<dbReference type="InterPro" id="IPR032675">
    <property type="entry name" value="LRR_dom_sf"/>
</dbReference>
<dbReference type="InterPro" id="IPR000372">
    <property type="entry name" value="LRRNT"/>
</dbReference>
<dbReference type="InterPro" id="IPR050333">
    <property type="entry name" value="SLRP"/>
</dbReference>
<dbReference type="PANTHER" id="PTHR45712">
    <property type="entry name" value="AGAP008170-PA"/>
    <property type="match status" value="1"/>
</dbReference>
<dbReference type="PANTHER" id="PTHR45712:SF11">
    <property type="entry name" value="BIGLYCAN"/>
    <property type="match status" value="1"/>
</dbReference>
<dbReference type="Pfam" id="PF13855">
    <property type="entry name" value="LRR_8"/>
    <property type="match status" value="1"/>
</dbReference>
<dbReference type="Pfam" id="PF01462">
    <property type="entry name" value="LRRNT"/>
    <property type="match status" value="1"/>
</dbReference>
<dbReference type="SMART" id="SM00369">
    <property type="entry name" value="LRR_TYP"/>
    <property type="match status" value="5"/>
</dbReference>
<dbReference type="SMART" id="SM00013">
    <property type="entry name" value="LRRNT"/>
    <property type="match status" value="1"/>
</dbReference>
<dbReference type="SUPFAM" id="SSF52058">
    <property type="entry name" value="L domain-like"/>
    <property type="match status" value="1"/>
</dbReference>
<dbReference type="PROSITE" id="PS51450">
    <property type="entry name" value="LRR"/>
    <property type="match status" value="5"/>
</dbReference>
<organism>
    <name type="scientific">Sus scrofa</name>
    <name type="common">Pig</name>
    <dbReference type="NCBI Taxonomy" id="9823"/>
    <lineage>
        <taxon>Eukaryota</taxon>
        <taxon>Metazoa</taxon>
        <taxon>Chordata</taxon>
        <taxon>Craniata</taxon>
        <taxon>Vertebrata</taxon>
        <taxon>Euteleostomi</taxon>
        <taxon>Mammalia</taxon>
        <taxon>Eutheria</taxon>
        <taxon>Laurasiatheria</taxon>
        <taxon>Artiodactyla</taxon>
        <taxon>Suina</taxon>
        <taxon>Suidae</taxon>
        <taxon>Sus</taxon>
    </lineage>
</organism>
<evidence type="ECO:0000250" key="1"/>
<evidence type="ECO:0000250" key="2">
    <source>
        <dbReference type="UniProtKB" id="P21810"/>
    </source>
</evidence>
<evidence type="ECO:0000250" key="3">
    <source>
        <dbReference type="UniProtKB" id="P47853"/>
    </source>
</evidence>
<evidence type="ECO:0000305" key="4"/>
<name>PGS1_PIG</name>
<keyword id="KW-1015">Disulfide bond</keyword>
<keyword id="KW-0272">Extracellular matrix</keyword>
<keyword id="KW-0325">Glycoprotein</keyword>
<keyword id="KW-0433">Leucine-rich repeat</keyword>
<keyword id="KW-0654">Proteoglycan</keyword>
<keyword id="KW-1185">Reference proteome</keyword>
<keyword id="KW-0677">Repeat</keyword>
<keyword id="KW-0964">Secreted</keyword>
<keyword id="KW-0732">Signal</keyword>
<comment type="function">
    <text evidence="1">May be involved in collagen fiber assembly.</text>
</comment>
<comment type="subunit">
    <text evidence="1">Homodimer. Forms a ternary complex with MFAP2 and ELN (By similarity).</text>
</comment>
<comment type="subcellular location">
    <subcellularLocation>
        <location evidence="1">Secreted</location>
        <location evidence="1">Extracellular space</location>
        <location evidence="1">Extracellular matrix</location>
    </subcellularLocation>
</comment>
<comment type="tissue specificity">
    <text>Found in several connective tissues, especially in articular cartilages.</text>
</comment>
<comment type="PTM">
    <text evidence="1">The two attached glycosaminoglycan chains can be either chondroitin sulfate or dermatan sulfate.</text>
</comment>
<comment type="similarity">
    <text evidence="4">Belongs to the small leucine-rich proteoglycan (SLRP) family. SLRP class I subfamily.</text>
</comment>
<protein>
    <recommendedName>
        <fullName>Biglycan</fullName>
    </recommendedName>
    <alternativeName>
        <fullName>Bone/cartilage proteoglycan I</fullName>
    </alternativeName>
    <alternativeName>
        <fullName>PG-S1</fullName>
    </alternativeName>
</protein>
<sequence>MWPLWLLASLLALSQALPFEQKAFWDFTLDDGLPMLNDEEASGADSTSGIPDLDALPPTFSAMCPFGCHCHLRVVQCSDLGLKAVPKEISPDTTLLDLQNNDISELRKDDFKGLQHLYALVLVNNKISRSTRRPSAPDGLKLNYLRISEAKLTGIPKDLPETLNELHLDHNKIQAIELEDLLRYSKLYRLGLGHNQIRMIENGSLSFLPTLRELHLDNNKLSRVPAGLPDLKLLQVVYLHTNNITKVGVNDFCPVGFGVKRAYYNGISLFNN</sequence>
<feature type="signal peptide" evidence="3">
    <location>
        <begin position="1"/>
        <end position="16"/>
    </location>
</feature>
<feature type="propeptide" id="PRO_0000032695" evidence="2">
    <location>
        <begin position="17"/>
        <end position="37"/>
    </location>
</feature>
<feature type="chain" id="PRO_0000032696" description="Biglycan">
    <location>
        <begin position="38"/>
        <end position="272"/>
    </location>
</feature>
<feature type="domain" description="LRRNT">
    <location>
        <begin position="55"/>
        <end position="91"/>
    </location>
</feature>
<feature type="repeat" description="LRR 1">
    <location>
        <begin position="92"/>
        <end position="113"/>
    </location>
</feature>
<feature type="repeat" description="LRR 2">
    <location>
        <begin position="116"/>
        <end position="137" status="greater than"/>
    </location>
</feature>
<feature type="repeat" description="LRR 3">
    <location>
        <begin position="138"/>
        <end position="161"/>
    </location>
</feature>
<feature type="repeat" description="LRR 4">
    <location>
        <begin position="162"/>
        <end position="183"/>
    </location>
</feature>
<feature type="repeat" description="LRR 5">
    <location>
        <begin position="186"/>
        <end position="209"/>
    </location>
</feature>
<feature type="repeat" description="LRR 6">
    <location>
        <begin position="210"/>
        <end position="232"/>
    </location>
</feature>
<feature type="repeat" description="LRR 7">
    <location>
        <begin position="233"/>
        <end position="254"/>
    </location>
</feature>
<feature type="repeat" description="LRR 8">
    <location>
        <begin position="255"/>
        <end position="272" status="greater than"/>
    </location>
</feature>
<feature type="glycosylation site" description="O-linked (Xyl...) (glycosaminoglycan) serine" evidence="2">
    <location>
        <position position="42"/>
    </location>
</feature>
<feature type="glycosylation site" description="O-linked (Xyl...) (glycosaminoglycan) serine" evidence="2">
    <location>
        <position position="48"/>
    </location>
</feature>
<feature type="disulfide bond" evidence="1">
    <location>
        <begin position="64"/>
        <end position="70"/>
    </location>
</feature>
<feature type="disulfide bond" evidence="1">
    <location>
        <begin position="68"/>
        <end position="77"/>
    </location>
</feature>
<feature type="non-consecutive residues" evidence="4">
    <location>
        <begin position="137"/>
        <end position="138"/>
    </location>
</feature>
<feature type="non-terminal residue">
    <location>
        <position position="272"/>
    </location>
</feature>
<gene>
    <name type="primary">BGN</name>
</gene>
<proteinExistence type="evidence at transcript level"/>